<accession>A7H4M0</accession>
<protein>
    <recommendedName>
        <fullName evidence="1">Chaperone protein HtpG</fullName>
    </recommendedName>
    <alternativeName>
        <fullName evidence="1">Heat shock protein HtpG</fullName>
    </alternativeName>
    <alternativeName>
        <fullName evidence="1">High temperature protein G</fullName>
    </alternativeName>
</protein>
<name>HTPG_CAMJD</name>
<gene>
    <name evidence="1" type="primary">htpG</name>
    <name type="ordered locus">JJD26997_1413</name>
</gene>
<organism>
    <name type="scientific">Campylobacter jejuni subsp. doylei (strain ATCC BAA-1458 / RM4099 / 269.97)</name>
    <dbReference type="NCBI Taxonomy" id="360109"/>
    <lineage>
        <taxon>Bacteria</taxon>
        <taxon>Pseudomonadati</taxon>
        <taxon>Campylobacterota</taxon>
        <taxon>Epsilonproteobacteria</taxon>
        <taxon>Campylobacterales</taxon>
        <taxon>Campylobacteraceae</taxon>
        <taxon>Campylobacter</taxon>
    </lineage>
</organism>
<dbReference type="EMBL" id="CP000768">
    <property type="protein sequence ID" value="ABS43789.1"/>
    <property type="molecule type" value="Genomic_DNA"/>
</dbReference>
<dbReference type="SMR" id="A7H4M0"/>
<dbReference type="KEGG" id="cjd:JJD26997_1413"/>
<dbReference type="HOGENOM" id="CLU_006684_3_0_7"/>
<dbReference type="Proteomes" id="UP000002302">
    <property type="component" value="Chromosome"/>
</dbReference>
<dbReference type="GO" id="GO:0005737">
    <property type="term" value="C:cytoplasm"/>
    <property type="evidence" value="ECO:0007669"/>
    <property type="project" value="UniProtKB-SubCell"/>
</dbReference>
<dbReference type="GO" id="GO:0005524">
    <property type="term" value="F:ATP binding"/>
    <property type="evidence" value="ECO:0007669"/>
    <property type="project" value="UniProtKB-UniRule"/>
</dbReference>
<dbReference type="GO" id="GO:0016887">
    <property type="term" value="F:ATP hydrolysis activity"/>
    <property type="evidence" value="ECO:0007669"/>
    <property type="project" value="InterPro"/>
</dbReference>
<dbReference type="GO" id="GO:0140662">
    <property type="term" value="F:ATP-dependent protein folding chaperone"/>
    <property type="evidence" value="ECO:0007669"/>
    <property type="project" value="InterPro"/>
</dbReference>
<dbReference type="GO" id="GO:0051082">
    <property type="term" value="F:unfolded protein binding"/>
    <property type="evidence" value="ECO:0007669"/>
    <property type="project" value="UniProtKB-UniRule"/>
</dbReference>
<dbReference type="CDD" id="cd16927">
    <property type="entry name" value="HATPase_Hsp90-like"/>
    <property type="match status" value="1"/>
</dbReference>
<dbReference type="FunFam" id="3.30.565.10:FF:000009">
    <property type="entry name" value="Molecular chaperone HtpG"/>
    <property type="match status" value="1"/>
</dbReference>
<dbReference type="Gene3D" id="3.30.230.80">
    <property type="match status" value="1"/>
</dbReference>
<dbReference type="Gene3D" id="3.40.50.11260">
    <property type="match status" value="1"/>
</dbReference>
<dbReference type="Gene3D" id="1.20.120.790">
    <property type="entry name" value="Heat shock protein 90, C-terminal domain"/>
    <property type="match status" value="1"/>
</dbReference>
<dbReference type="Gene3D" id="3.30.565.10">
    <property type="entry name" value="Histidine kinase-like ATPase, C-terminal domain"/>
    <property type="match status" value="1"/>
</dbReference>
<dbReference type="HAMAP" id="MF_00505">
    <property type="entry name" value="HSP90"/>
    <property type="match status" value="1"/>
</dbReference>
<dbReference type="InterPro" id="IPR036890">
    <property type="entry name" value="HATPase_C_sf"/>
</dbReference>
<dbReference type="InterPro" id="IPR019805">
    <property type="entry name" value="Heat_shock_protein_90_CS"/>
</dbReference>
<dbReference type="InterPro" id="IPR037196">
    <property type="entry name" value="HSP90_C"/>
</dbReference>
<dbReference type="InterPro" id="IPR001404">
    <property type="entry name" value="Hsp90_fam"/>
</dbReference>
<dbReference type="InterPro" id="IPR020575">
    <property type="entry name" value="Hsp90_N"/>
</dbReference>
<dbReference type="InterPro" id="IPR020568">
    <property type="entry name" value="Ribosomal_Su5_D2-typ_SF"/>
</dbReference>
<dbReference type="NCBIfam" id="NF003555">
    <property type="entry name" value="PRK05218.1"/>
    <property type="match status" value="1"/>
</dbReference>
<dbReference type="PANTHER" id="PTHR11528">
    <property type="entry name" value="HEAT SHOCK PROTEIN 90 FAMILY MEMBER"/>
    <property type="match status" value="1"/>
</dbReference>
<dbReference type="Pfam" id="PF13589">
    <property type="entry name" value="HATPase_c_3"/>
    <property type="match status" value="1"/>
</dbReference>
<dbReference type="Pfam" id="PF00183">
    <property type="entry name" value="HSP90"/>
    <property type="match status" value="1"/>
</dbReference>
<dbReference type="PIRSF" id="PIRSF002583">
    <property type="entry name" value="Hsp90"/>
    <property type="match status" value="1"/>
</dbReference>
<dbReference type="PRINTS" id="PR00775">
    <property type="entry name" value="HEATSHOCK90"/>
</dbReference>
<dbReference type="SMART" id="SM00387">
    <property type="entry name" value="HATPase_c"/>
    <property type="match status" value="1"/>
</dbReference>
<dbReference type="SUPFAM" id="SSF55874">
    <property type="entry name" value="ATPase domain of HSP90 chaperone/DNA topoisomerase II/histidine kinase"/>
    <property type="match status" value="1"/>
</dbReference>
<dbReference type="SUPFAM" id="SSF110942">
    <property type="entry name" value="HSP90 C-terminal domain"/>
    <property type="match status" value="1"/>
</dbReference>
<dbReference type="SUPFAM" id="SSF54211">
    <property type="entry name" value="Ribosomal protein S5 domain 2-like"/>
    <property type="match status" value="1"/>
</dbReference>
<dbReference type="PROSITE" id="PS00298">
    <property type="entry name" value="HSP90"/>
    <property type="match status" value="1"/>
</dbReference>
<sequence length="608" mass="69676">MQFQTEVNQLLQLMIHSLYSNKEIFLRELISNASDALDKLNFLSVSDDKYKSLKFEPKIEIKIDKDKKTLSISDNGIGMDKNDLINNLGTIAKSGTKSFLENLSGDAKKDSQLIGQFGVGFYSAFMVASKIEVLSKKALDDKAYLWSSDANGYEINDASKEEQGTSITLYLKDDEFAHAYKIENIIEKYSNHIQFPIFMEKEEFTPAKEGEEEGKTELKISQINKANALWRMQKSSLKAEDYERFYEQNFHDSNKPLLYLHTKSEGKLEYNSLFFIPQNAPFDLFRVDYQSGLKLYVKRVFISDDDKELLPTYLRFVRGIIDVEDLPLNVSREILQENQILKGVKEASVKKILGELEKLKNNDKEKYLSFFKTFGKVLKEGLYGFGGEKDSLLKLMLYKSTKGENLRSLEEYKNDLQGEQKEIFYIAGNNESLLRTSPLLEEYKQKNIEVLLMDDEIDSLVTPMLEFEGLKFVAINQVEDKNELSDEEKNTFAPLVAKFKELLKDQVEDVRLTSRLKDSPSCIVYDKNKLDFAMQQLLKQMGQEQNFKPILEINPKHAIFTGLKNNETFSADIATLVLNMAKLSEGMGVDNPAEFNASLTKIINKAFS</sequence>
<evidence type="ECO:0000255" key="1">
    <source>
        <dbReference type="HAMAP-Rule" id="MF_00505"/>
    </source>
</evidence>
<keyword id="KW-0067">ATP-binding</keyword>
<keyword id="KW-0143">Chaperone</keyword>
<keyword id="KW-0963">Cytoplasm</keyword>
<keyword id="KW-0547">Nucleotide-binding</keyword>
<keyword id="KW-0346">Stress response</keyword>
<reference key="1">
    <citation type="submission" date="2007-07" db="EMBL/GenBank/DDBJ databases">
        <title>Complete genome sequence of Campylobacter jejuni subsp doylei 269.97 isolated from human blood.</title>
        <authorList>
            <person name="Fouts D.E."/>
            <person name="Mongodin E.F."/>
            <person name="Puiu D."/>
            <person name="Sebastian Y."/>
            <person name="Miller W.G."/>
            <person name="Mandrell R.E."/>
            <person name="Lastovica A.J."/>
            <person name="Nelson K.E."/>
        </authorList>
    </citation>
    <scope>NUCLEOTIDE SEQUENCE [LARGE SCALE GENOMIC DNA]</scope>
    <source>
        <strain>ATCC BAA-1458 / RM4099 / 269.97</strain>
    </source>
</reference>
<feature type="chain" id="PRO_1000014907" description="Chaperone protein HtpG">
    <location>
        <begin position="1"/>
        <end position="608"/>
    </location>
</feature>
<feature type="region of interest" description="A; substrate-binding" evidence="1">
    <location>
        <begin position="1"/>
        <end position="332"/>
    </location>
</feature>
<feature type="region of interest" description="B" evidence="1">
    <location>
        <begin position="333"/>
        <end position="536"/>
    </location>
</feature>
<feature type="region of interest" description="C" evidence="1">
    <location>
        <begin position="537"/>
        <end position="608"/>
    </location>
</feature>
<proteinExistence type="inferred from homology"/>
<comment type="function">
    <text evidence="1">Molecular chaperone. Has ATPase activity.</text>
</comment>
<comment type="subunit">
    <text evidence="1">Homodimer.</text>
</comment>
<comment type="subcellular location">
    <subcellularLocation>
        <location evidence="1">Cytoplasm</location>
    </subcellularLocation>
</comment>
<comment type="similarity">
    <text evidence="1">Belongs to the heat shock protein 90 family.</text>
</comment>